<comment type="function">
    <text evidence="1">Gag-Pol polyprotein and Gag polyprotein may regulate their own translation, by the binding genomic RNA in the 5'-UTR. At low concentration, Gag-Pol and Gag would promote translation, whereas at high concentration, the polyproteins encapsidate genomic RNA and then shut off translation (By similarity).</text>
</comment>
<comment type="function">
    <text evidence="1">Matrix protein p17 has two main functions: in infected cell, it targets Gag and Gag-pol polyproteins to the plasma membrane via a multipartite membrane-binding signal, that includes its myristointegration complex. The myristoylation signal and the NLS exert conflicting influences its subcellular localization. The key regulation of these motifs might be phosphorylation of a portion of MA molecules on the C-terminal tyrosine at the time of virus maturation, by virion-associated cellular tyrosine kinase. Implicated in the release from host cell mediated by Vpu (By similarity).</text>
</comment>
<comment type="function">
    <text evidence="1">Capsid protein p24 forms the conical core that encapsulates the genomic RNA-nucleocapsid complex in the virion. The core is constituted by capsid protein hexamer subunits. The core is disassembled soon after virion entry. Interaction with host PPIA/CYPA protects the virus from restriction by host TRIM5-alpha and from an unknown antiviral activity in host cells. This capsid restriction by TRIM5 is one of the factors which restricts SIV to the simian species (By similarity).</text>
</comment>
<comment type="function">
    <text evidence="1">Nucleocapsid protein p7 encapsulates and protects viral dimeric unspliced (genomic) RNA. Binds these RNAs through its zinc fingers. Facilitates rearangement of nucleic acid secondary structure during retrotranscription of genomic RNA. This capability is referred to as nucleic acid chaperone activity (By similarity).</text>
</comment>
<comment type="function">
    <text evidence="10">The aspartyl protease mediates proteolytic cleavages of Gag and Gag-Pol polyproteins during or shortly after the release of the virion from the plasma membrane. Cleavages take place as an ordered, step-wise cascade to yield mature proteins. This process is called maturation. Displays maximal activity during the budding process just prior to particle release from the cell. Also cleaves Nef and Vif, probably concomitantly with viral structural proteins on maturation of virus particles. Hydrolyzes host EIF4GI and PABP1 in order to shut off the capped cellular mRNA translation. The resulting inhibition of cellular protein synthesis serves to ensure maximal viral gene expression and to evade host immune response (By similarity).</text>
</comment>
<comment type="function">
    <text evidence="1">Reverse transcriptase/ribonuclease H (RT) is a multifunctional enzyme that converts the viral dimeric RNA genome into dsDNA in the cytoplasm, shortly after virus entry into the cell. This enzyme displays a DNA polymerase activity that can copy either DNA or RNA templates, and a ribonuclease H (RNase H) activity that cleaves the RNA strand of RNA-DNA heteroduplexes in a partially processive 3' to 5' endonucleasic mode. Conversion of viral genomic RNA into dsDNA requires many steps. A tRNA binds to the primer-binding site (PBS) situated at the 5'-end of the viral RNA. RT uses the 3' end of the tRNA primer to perform a short round of RNA-dependent minus-strand DNA synthesis. The reading proceeds through the U5 region and ends after the repeated (R) region which is present at both ends of viral RNA. The portion of the RNA-DNA heteroduplex is digested by the RNase H, resulting in a ssDNA product attached to the tRNA primer. This ssDNA/tRNA hybridizes with the identical R region situated at the 3' end of viral RNA. This template exchange, known as minus-strand DNA strong stop transfer, can be either intra- or intermolecular. RT uses the 3' end of this newly synthesized short ssDNA to perform the RNA-dependent minus-strand DNA synthesis of the whole template. RNase H digests the RNA template except for two polypurine tracts (PPTs) situated at the 5'-end and near the center of the genome. It is not clear if both polymerase and RNase H activities are simultaneous. RNase H can probably proceed both in a polymerase-dependent (RNA cut into small fragments by the same RT performing DNA synthesis) and a polymerase-independent mode (cleavage of remaining RNA fragments by free RTs). Secondly, RT performs DNA-directed plus-strand DNA synthesis using the PPTs that have not been removed by RNase H as primers. PPTs and tRNA primers are then removed by RNase H. The 3' and 5' ssDNA PBS regions hybridize to form a circular dsDNA intermediate. Strand displacement synthesis by RT to the PBS and PPT ends produces a blunt ended, linear dsDNA copy of the viral genome that includes long terminal repeats (LTRs) at both ends (By similarity).</text>
</comment>
<comment type="function">
    <text evidence="1">Integrase catalyzes viral DNA integration into the host chromosome, by performing a series of DNA cutting and joining reactions. This enzyme activity takes place after virion entry into a cell and reverse transcription of the RNA genome in dsDNA. The first step in the integration process is 3' processing. This step requires a complex comprising the viral genome, matrix protein, Vpr and integrase. This complex is called the pre-integration complex (PIC). The integrase protein removes 2 nucleotides from each 3' end of the viral DNA, leaving recessed CA OH's at the 3' ends. In the second step, the PIC enters cell nucleus. This process is mediated through integrase and Vpr proteins, and allows the virus to infect a non dividing cell. This ability to enter the nucleus is specific of lentiviruses, other retroviruses cannot and rely on cell division to access cell chromosomes. In the third step, termed strand transfer, the integrase protein joins the previously processed 3' ends to the 5' ends of strands of target cellular DNA at the site of integration. The 5'-ends are produced by integrase-catalyzed staggered cuts, 5 bp apart. A Y-shaped, gapped, recombination intermediate results, with the 5'-ends of the viral DNA strands and the 3' ends of target DNA strands remaining unjoined, flanking a gap of 5 bp. The last step is viral DNA integration into host chromosome. This involves host DNA repair synthesis in which the 5 bp gaps between the unjoined strands are filled in and then ligated. Since this process occurs at both cuts flanking the SIV genome, a 5 bp duplication of host DNA is produced at the ends of SIV integration. Alternatively, Integrase may catalyze the excision of viral DNA just after strand transfer, this is termed disintegration (By similarity).</text>
</comment>
<comment type="catalytic activity">
    <reaction evidence="10">
        <text>Specific for a P1 residue that is hydrophobic, and P1' variable, but often Pro.</text>
        <dbReference type="EC" id="3.4.23.16"/>
    </reaction>
</comment>
<comment type="catalytic activity">
    <reaction>
        <text>Endohydrolysis of RNA in RNA/DNA hybrids. Three different cleavage modes: 1. sequence-specific internal cleavage of RNA. Human immunodeficiency virus type 1 and Moloney murine leukemia virus enzymes prefer to cleave the RNA strand one nucleotide away from the RNA-DNA junction. 2. RNA 5'-end directed cleavage 13-19 nucleotides from the RNA end. 3. DNA 3'-end directed cleavage 15-20 nucleotides away from the primer terminus.</text>
        <dbReference type="EC" id="3.1.26.13"/>
    </reaction>
</comment>
<comment type="catalytic activity">
    <reaction>
        <text>3'-end directed exonucleolytic cleavage of viral RNA-DNA hybrid.</text>
        <dbReference type="EC" id="3.1.13.2"/>
    </reaction>
</comment>
<comment type="catalytic activity">
    <reaction evidence="11">
        <text>DNA(n) + a 2'-deoxyribonucleoside 5'-triphosphate = DNA(n+1) + diphosphate</text>
        <dbReference type="Rhea" id="RHEA:22508"/>
        <dbReference type="Rhea" id="RHEA-COMP:17339"/>
        <dbReference type="Rhea" id="RHEA-COMP:17340"/>
        <dbReference type="ChEBI" id="CHEBI:33019"/>
        <dbReference type="ChEBI" id="CHEBI:61560"/>
        <dbReference type="ChEBI" id="CHEBI:173112"/>
        <dbReference type="EC" id="2.7.7.49"/>
    </reaction>
</comment>
<comment type="catalytic activity">
    <reaction evidence="11">
        <text>DNA(n) + a 2'-deoxyribonucleoside 5'-triphosphate = DNA(n+1) + diphosphate</text>
        <dbReference type="Rhea" id="RHEA:22508"/>
        <dbReference type="Rhea" id="RHEA-COMP:17339"/>
        <dbReference type="Rhea" id="RHEA-COMP:17340"/>
        <dbReference type="ChEBI" id="CHEBI:33019"/>
        <dbReference type="ChEBI" id="CHEBI:61560"/>
        <dbReference type="ChEBI" id="CHEBI:173112"/>
        <dbReference type="EC" id="2.7.7.7"/>
    </reaction>
</comment>
<comment type="cofactor">
    <cofactor evidence="1">
        <name>Mg(2+)</name>
        <dbReference type="ChEBI" id="CHEBI:18420"/>
    </cofactor>
    <text evidence="1">Binds 2 magnesium ions for reverse transcriptase polymerase activity.</text>
</comment>
<comment type="cofactor">
    <cofactor evidence="1">
        <name>Mg(2+)</name>
        <dbReference type="ChEBI" id="CHEBI:18420"/>
    </cofactor>
    <text evidence="1">Binds 2 magnesium ions for ribonuclease H (RNase H) activity. Substrate-binding is a precondition for magnesium binding.</text>
</comment>
<comment type="cofactor">
    <cofactor evidence="1">
        <name>Mg(2+)</name>
        <dbReference type="ChEBI" id="CHEBI:18420"/>
    </cofactor>
    <text evidence="1">Magnesium ions are required for integrase activity. Binds at least 1, maybe 2 magnesium ions.</text>
</comment>
<comment type="activity regulation">
    <text>The viral protease is inhibited by many synthetic protease inhibitors (PIs), such as amprenavir, atazanavir, indinavir, loprinavir, nelfinavir, ritonavir and saquinavir. RT can be inhibited either by nucleoside RT inhibitors (NRTIs) or by non nucleoside RT inhibitors (NNRTIs). NRTIs act as chain terminators, whereas NNRTIs inhibit DNA polymerization by binding a small hydrophobic pocket near the RT active site and inducing an allosteric change in this region. Classical NRTIs are abacavir, adefovir (PMEA), didanosine (ddI), lamivudine (3TC), stavudine (d4T), tenofovir (PMPA), zalcitabine (ddC), and zidovudine (AZT). Classical NNRTIs are atevirdine (BHAP U-87201E), delavirdine, efavirenz (DMP-266), emivirine (I-EBU), and nevirapine (BI-RG-587). The tritherapies used as a basic effective treatment of AIDS associate two NRTIs and one NNRTI. Use of protease inhibitors in tritherapy regimens permit more ambitious therapeutic strategies.</text>
</comment>
<comment type="subunit">
    <molecule>Matrix protein p17</molecule>
    <text evidence="5 6">Homotrimer. Interacts with gp41 (via C-terminus).</text>
</comment>
<comment type="subunit">
    <molecule>Protease</molecule>
    <text evidence="4 7">Homodimer. The active site consists of two apposed aspartic acid residues.</text>
</comment>
<comment type="subunit">
    <molecule>Reverse transcriptase/ribonuclease H</molecule>
    <text evidence="2">Heterodimer of p66 RT and p51 RT (RT p66/p51). Heterodimerization of RT is essential for DNA polymerase activity. Despite the sequence identities, p66 RT and p51 RT have distinct folding.</text>
</comment>
<comment type="subunit">
    <molecule>Integrase</molecule>
    <text evidence="3">Homotetramer; may further associate as a homohexadecamer (By similarity).</text>
</comment>
<comment type="subcellular location">
    <molecule>Matrix protein p17</molecule>
    <subcellularLocation>
        <location evidence="18">Virion</location>
    </subcellularLocation>
    <subcellularLocation>
        <location evidence="1">Host nucleus</location>
    </subcellularLocation>
    <subcellularLocation>
        <location evidence="1">Host cytoplasm</location>
    </subcellularLocation>
    <subcellularLocation>
        <location evidence="18">Host cell membrane</location>
        <topology evidence="18">Lipid-anchor</topology>
    </subcellularLocation>
    <text evidence="1">Following virus entry, the nuclear localization signal (NLS) of the matrix protein participates with Vpr to the nuclear localization of the viral genome. During virus production, the nuclear export activity of the matrix protein counteracts the NLS to maintain the Gag and Gag-Pol polyproteins in the cytoplasm, thereby directing unspliced RNA to the plasma membrane (By similarity).</text>
</comment>
<comment type="subcellular location">
    <molecule>Capsid protein p24</molecule>
    <subcellularLocation>
        <location evidence="18">Virion</location>
    </subcellularLocation>
</comment>
<comment type="subcellular location">
    <molecule>Nucleocapsid protein p7</molecule>
    <subcellularLocation>
        <location evidence="18">Virion</location>
    </subcellularLocation>
</comment>
<comment type="subcellular location">
    <molecule>Reverse transcriptase/ribonuclease H</molecule>
    <subcellularLocation>
        <location evidence="18">Virion</location>
    </subcellularLocation>
</comment>
<comment type="subcellular location">
    <molecule>Integrase</molecule>
    <subcellularLocation>
        <location evidence="18">Virion</location>
    </subcellularLocation>
    <subcellularLocation>
        <location evidence="18">Host nucleus</location>
    </subcellularLocation>
    <subcellularLocation>
        <location evidence="18">Host cytoplasm</location>
    </subcellularLocation>
    <text evidence="18">Nuclear at initial phase, cytoplasmic at assembly.</text>
</comment>
<comment type="alternative products">
    <event type="ribosomal frameshifting"/>
    <isoform>
        <id>P05895-1</id>
        <name>Gag-Pol polyprotein</name>
        <sequence type="displayed"/>
    </isoform>
    <isoform>
        <id>P05892-1</id>
        <name>Gag polyprotein</name>
        <sequence type="external"/>
    </isoform>
    <text>Translation results in the formation of the Gag polyprotein most of the time. Ribosomal frameshifting at the gag-pol genes boundary occurs at low frequency and produces the Gag-Pol polyprotein. This strategy of translation probably allows the virus to modulate the quantity of each viral protein. Maintenance of a correct Gag to Gag-Pol ratio is essential for RNA dimerization and viral infectivity.</text>
</comment>
<comment type="domain">
    <text evidence="1">The p66 RT is structured in five subdomains: finger, palm, thumb, connection and RNase H. Within the palm subdomain, the 'primer grip' region is thought to be involved in the positioning of the primer terminus for accommodating the incoming nucleotide. The RNase H domain stabilizes the association of RT with primer-template (By similarity).</text>
</comment>
<comment type="domain">
    <text evidence="1">The tryptophan repeat motif is involved in RT p66/p51 dimerization.</text>
</comment>
<comment type="PTM">
    <text evidence="11">Specific enzymatic cleavages by the viral protease yield mature proteins. The protease is released by autocatalytic cleavage. The polyprotein is cleaved during and after budding, this process is termed maturation. Proteolytic cleavage of p66 RT removes the RNase H domain to yield the p51 RT subunit.</text>
</comment>
<comment type="PTM">
    <text>Capsid protein p24 is phosphorylated.</text>
</comment>
<comment type="miscellaneous">
    <text>This is an African green monkey isolate.</text>
</comment>
<comment type="miscellaneous">
    <text>The reverse transcriptase is an error-prone enzyme that lacks a proof-reading function. High mutations rate is a direct consequence of this characteristic. RT also displays frequent template switching leading to high recombination rate. Recombination mostly occurs between homologous regions of the two copackaged RNA genomes. If these two RNA molecules derive from different viral strains, reverse transcription will give rise to highly recombinated proviral DNAs.</text>
</comment>
<comment type="miscellaneous">
    <molecule>Isoform Gag-Pol polyprotein</molecule>
    <text>Produced by -1 ribosomal frameshifting.</text>
</comment>
<dbReference type="EC" id="3.4.23.16"/>
<dbReference type="EC" id="2.7.7.49"/>
<dbReference type="EC" id="2.7.7.7"/>
<dbReference type="EC" id="3.1.26.13"/>
<dbReference type="EC" id="3.1.13.2"/>
<dbReference type="EC" id="2.7.7.-" evidence="4"/>
<dbReference type="EC" id="3.1.-.-" evidence="4"/>
<dbReference type="EMBL" id="X07805">
    <property type="protein sequence ID" value="CAA30658.1"/>
    <property type="status" value="ALT_SEQ"/>
    <property type="molecule type" value="Genomic_DNA"/>
</dbReference>
<dbReference type="SMR" id="P05895"/>
<dbReference type="MEROPS" id="A02.003"/>
<dbReference type="PRO" id="PR:P05895"/>
<dbReference type="GO" id="GO:0043657">
    <property type="term" value="C:host cell"/>
    <property type="evidence" value="ECO:0007669"/>
    <property type="project" value="GOC"/>
</dbReference>
<dbReference type="GO" id="GO:0030430">
    <property type="term" value="C:host cell cytoplasm"/>
    <property type="evidence" value="ECO:0007669"/>
    <property type="project" value="UniProtKB-SubCell"/>
</dbReference>
<dbReference type="GO" id="GO:0042025">
    <property type="term" value="C:host cell nucleus"/>
    <property type="evidence" value="ECO:0007669"/>
    <property type="project" value="UniProtKB-SubCell"/>
</dbReference>
<dbReference type="GO" id="GO:0020002">
    <property type="term" value="C:host cell plasma membrane"/>
    <property type="evidence" value="ECO:0007669"/>
    <property type="project" value="UniProtKB-SubCell"/>
</dbReference>
<dbReference type="GO" id="GO:0016020">
    <property type="term" value="C:membrane"/>
    <property type="evidence" value="ECO:0007669"/>
    <property type="project" value="UniProtKB-KW"/>
</dbReference>
<dbReference type="GO" id="GO:0019013">
    <property type="term" value="C:viral nucleocapsid"/>
    <property type="evidence" value="ECO:0007669"/>
    <property type="project" value="UniProtKB-KW"/>
</dbReference>
<dbReference type="GO" id="GO:0004190">
    <property type="term" value="F:aspartic-type endopeptidase activity"/>
    <property type="evidence" value="ECO:0007669"/>
    <property type="project" value="UniProtKB-KW"/>
</dbReference>
<dbReference type="GO" id="GO:0003677">
    <property type="term" value="F:DNA binding"/>
    <property type="evidence" value="ECO:0007669"/>
    <property type="project" value="UniProtKB-KW"/>
</dbReference>
<dbReference type="GO" id="GO:0003887">
    <property type="term" value="F:DNA-directed DNA polymerase activity"/>
    <property type="evidence" value="ECO:0007669"/>
    <property type="project" value="UniProtKB-KW"/>
</dbReference>
<dbReference type="GO" id="GO:0004533">
    <property type="term" value="F:exoribonuclease H activity"/>
    <property type="evidence" value="ECO:0007669"/>
    <property type="project" value="UniProtKB-EC"/>
</dbReference>
<dbReference type="GO" id="GO:0035613">
    <property type="term" value="F:RNA stem-loop binding"/>
    <property type="evidence" value="ECO:0007669"/>
    <property type="project" value="TreeGrafter"/>
</dbReference>
<dbReference type="GO" id="GO:0003964">
    <property type="term" value="F:RNA-directed DNA polymerase activity"/>
    <property type="evidence" value="ECO:0007669"/>
    <property type="project" value="UniProtKB-KW"/>
</dbReference>
<dbReference type="GO" id="GO:0004523">
    <property type="term" value="F:RNA-DNA hybrid ribonuclease activity"/>
    <property type="evidence" value="ECO:0007669"/>
    <property type="project" value="InterPro"/>
</dbReference>
<dbReference type="GO" id="GO:0005198">
    <property type="term" value="F:structural molecule activity"/>
    <property type="evidence" value="ECO:0007669"/>
    <property type="project" value="InterPro"/>
</dbReference>
<dbReference type="GO" id="GO:0008270">
    <property type="term" value="F:zinc ion binding"/>
    <property type="evidence" value="ECO:0007669"/>
    <property type="project" value="UniProtKB-KW"/>
</dbReference>
<dbReference type="GO" id="GO:0015074">
    <property type="term" value="P:DNA integration"/>
    <property type="evidence" value="ECO:0007669"/>
    <property type="project" value="UniProtKB-KW"/>
</dbReference>
<dbReference type="GO" id="GO:0006310">
    <property type="term" value="P:DNA recombination"/>
    <property type="evidence" value="ECO:0007669"/>
    <property type="project" value="UniProtKB-KW"/>
</dbReference>
<dbReference type="GO" id="GO:0075713">
    <property type="term" value="P:establishment of integrated proviral latency"/>
    <property type="evidence" value="ECO:0007669"/>
    <property type="project" value="UniProtKB-KW"/>
</dbReference>
<dbReference type="GO" id="GO:0006508">
    <property type="term" value="P:proteolysis"/>
    <property type="evidence" value="ECO:0007669"/>
    <property type="project" value="UniProtKB-KW"/>
</dbReference>
<dbReference type="GO" id="GO:0046718">
    <property type="term" value="P:symbiont entry into host cell"/>
    <property type="evidence" value="ECO:0007669"/>
    <property type="project" value="UniProtKB-KW"/>
</dbReference>
<dbReference type="GO" id="GO:0039657">
    <property type="term" value="P:symbiont-mediated suppression of host gene expression"/>
    <property type="evidence" value="ECO:0007669"/>
    <property type="project" value="UniProtKB-KW"/>
</dbReference>
<dbReference type="GO" id="GO:0044826">
    <property type="term" value="P:viral genome integration into host DNA"/>
    <property type="evidence" value="ECO:0007669"/>
    <property type="project" value="UniProtKB-KW"/>
</dbReference>
<dbReference type="GO" id="GO:0075732">
    <property type="term" value="P:viral penetration into host nucleus"/>
    <property type="evidence" value="ECO:0007669"/>
    <property type="project" value="UniProtKB-KW"/>
</dbReference>
<dbReference type="GO" id="GO:0075523">
    <property type="term" value="P:viral translational frameshifting"/>
    <property type="evidence" value="ECO:0007669"/>
    <property type="project" value="UniProtKB-KW"/>
</dbReference>
<dbReference type="Gene3D" id="1.10.10.200">
    <property type="match status" value="1"/>
</dbReference>
<dbReference type="Gene3D" id="1.10.1200.30">
    <property type="match status" value="1"/>
</dbReference>
<dbReference type="Gene3D" id="3.30.70.270">
    <property type="match status" value="3"/>
</dbReference>
<dbReference type="Gene3D" id="2.40.70.10">
    <property type="entry name" value="Acid Proteases"/>
    <property type="match status" value="1"/>
</dbReference>
<dbReference type="Gene3D" id="3.10.10.10">
    <property type="entry name" value="HIV Type 1 Reverse Transcriptase, subunit A, domain 1"/>
    <property type="match status" value="1"/>
</dbReference>
<dbReference type="Gene3D" id="1.10.375.10">
    <property type="entry name" value="Human Immunodeficiency Virus Type 1 Capsid Protein"/>
    <property type="match status" value="1"/>
</dbReference>
<dbReference type="Gene3D" id="1.10.150.90">
    <property type="entry name" value="Immunodeficiency lentiviruses, gag gene matrix protein p17"/>
    <property type="match status" value="1"/>
</dbReference>
<dbReference type="Gene3D" id="2.30.30.10">
    <property type="entry name" value="Integrase, C-terminal domain superfamily, retroviral"/>
    <property type="match status" value="1"/>
</dbReference>
<dbReference type="Gene3D" id="3.30.420.10">
    <property type="entry name" value="Ribonuclease H-like superfamily/Ribonuclease H"/>
    <property type="match status" value="2"/>
</dbReference>
<dbReference type="Gene3D" id="1.20.5.760">
    <property type="entry name" value="Single helix bin"/>
    <property type="match status" value="1"/>
</dbReference>
<dbReference type="Gene3D" id="4.10.60.10">
    <property type="entry name" value="Zinc finger, CCHC-type"/>
    <property type="match status" value="1"/>
</dbReference>
<dbReference type="InterPro" id="IPR001969">
    <property type="entry name" value="Aspartic_peptidase_AS"/>
</dbReference>
<dbReference type="InterPro" id="IPR043502">
    <property type="entry name" value="DNA/RNA_pol_sf"/>
</dbReference>
<dbReference type="InterPro" id="IPR045345">
    <property type="entry name" value="Gag_p24_C"/>
</dbReference>
<dbReference type="InterPro" id="IPR017856">
    <property type="entry name" value="Integrase-like_N"/>
</dbReference>
<dbReference type="InterPro" id="IPR036862">
    <property type="entry name" value="Integrase_C_dom_sf_retrovir"/>
</dbReference>
<dbReference type="InterPro" id="IPR001037">
    <property type="entry name" value="Integrase_C_retrovir"/>
</dbReference>
<dbReference type="InterPro" id="IPR001584">
    <property type="entry name" value="Integrase_cat-core"/>
</dbReference>
<dbReference type="InterPro" id="IPR003308">
    <property type="entry name" value="Integrase_Zn-bd_dom_N"/>
</dbReference>
<dbReference type="InterPro" id="IPR000071">
    <property type="entry name" value="Lentvrl_matrix_N"/>
</dbReference>
<dbReference type="InterPro" id="IPR012344">
    <property type="entry name" value="Matrix_HIV/RSV_N"/>
</dbReference>
<dbReference type="InterPro" id="IPR001995">
    <property type="entry name" value="Peptidase_A2_cat"/>
</dbReference>
<dbReference type="InterPro" id="IPR021109">
    <property type="entry name" value="Peptidase_aspartic_dom_sf"/>
</dbReference>
<dbReference type="InterPro" id="IPR018061">
    <property type="entry name" value="Retropepsins"/>
</dbReference>
<dbReference type="InterPro" id="IPR008916">
    <property type="entry name" value="Retrov_capsid_C"/>
</dbReference>
<dbReference type="InterPro" id="IPR008919">
    <property type="entry name" value="Retrov_capsid_N"/>
</dbReference>
<dbReference type="InterPro" id="IPR010999">
    <property type="entry name" value="Retrovr_matrix"/>
</dbReference>
<dbReference type="InterPro" id="IPR043128">
    <property type="entry name" value="Rev_trsase/Diguanyl_cyclase"/>
</dbReference>
<dbReference type="InterPro" id="IPR012337">
    <property type="entry name" value="RNaseH-like_sf"/>
</dbReference>
<dbReference type="InterPro" id="IPR002156">
    <property type="entry name" value="RNaseH_domain"/>
</dbReference>
<dbReference type="InterPro" id="IPR036397">
    <property type="entry name" value="RNaseH_sf"/>
</dbReference>
<dbReference type="InterPro" id="IPR000477">
    <property type="entry name" value="RT_dom"/>
</dbReference>
<dbReference type="InterPro" id="IPR010659">
    <property type="entry name" value="RVT_connect"/>
</dbReference>
<dbReference type="InterPro" id="IPR010661">
    <property type="entry name" value="RVT_thumb"/>
</dbReference>
<dbReference type="InterPro" id="IPR001878">
    <property type="entry name" value="Znf_CCHC"/>
</dbReference>
<dbReference type="InterPro" id="IPR036875">
    <property type="entry name" value="Znf_CCHC_sf"/>
</dbReference>
<dbReference type="PANTHER" id="PTHR41694">
    <property type="entry name" value="ENDOGENOUS RETROVIRUS GROUP K MEMBER POL PROTEIN"/>
    <property type="match status" value="1"/>
</dbReference>
<dbReference type="PANTHER" id="PTHR41694:SF3">
    <property type="entry name" value="RNA-DIRECTED DNA POLYMERASE-RELATED"/>
    <property type="match status" value="1"/>
</dbReference>
<dbReference type="Pfam" id="PF00540">
    <property type="entry name" value="Gag_p17"/>
    <property type="match status" value="1"/>
</dbReference>
<dbReference type="Pfam" id="PF00607">
    <property type="entry name" value="Gag_p24"/>
    <property type="match status" value="1"/>
</dbReference>
<dbReference type="Pfam" id="PF19317">
    <property type="entry name" value="Gag_p24_C"/>
    <property type="match status" value="1"/>
</dbReference>
<dbReference type="Pfam" id="PF00552">
    <property type="entry name" value="IN_DBD_C"/>
    <property type="match status" value="1"/>
</dbReference>
<dbReference type="Pfam" id="PF02022">
    <property type="entry name" value="Integrase_Zn"/>
    <property type="match status" value="1"/>
</dbReference>
<dbReference type="Pfam" id="PF00075">
    <property type="entry name" value="RNase_H"/>
    <property type="match status" value="1"/>
</dbReference>
<dbReference type="Pfam" id="PF00665">
    <property type="entry name" value="rve"/>
    <property type="match status" value="1"/>
</dbReference>
<dbReference type="Pfam" id="PF00077">
    <property type="entry name" value="RVP"/>
    <property type="match status" value="1"/>
</dbReference>
<dbReference type="Pfam" id="PF00078">
    <property type="entry name" value="RVT_1"/>
    <property type="match status" value="1"/>
</dbReference>
<dbReference type="Pfam" id="PF06815">
    <property type="entry name" value="RVT_connect"/>
    <property type="match status" value="1"/>
</dbReference>
<dbReference type="Pfam" id="PF06817">
    <property type="entry name" value="RVT_thumb"/>
    <property type="match status" value="1"/>
</dbReference>
<dbReference type="Pfam" id="PF00098">
    <property type="entry name" value="zf-CCHC"/>
    <property type="match status" value="2"/>
</dbReference>
<dbReference type="PRINTS" id="PR00234">
    <property type="entry name" value="HIV1MATRIX"/>
</dbReference>
<dbReference type="SMART" id="SM00343">
    <property type="entry name" value="ZnF_C2HC"/>
    <property type="match status" value="2"/>
</dbReference>
<dbReference type="SUPFAM" id="SSF50630">
    <property type="entry name" value="Acid proteases"/>
    <property type="match status" value="1"/>
</dbReference>
<dbReference type="SUPFAM" id="SSF50122">
    <property type="entry name" value="DNA-binding domain of retroviral integrase"/>
    <property type="match status" value="1"/>
</dbReference>
<dbReference type="SUPFAM" id="SSF56672">
    <property type="entry name" value="DNA/RNA polymerases"/>
    <property type="match status" value="1"/>
</dbReference>
<dbReference type="SUPFAM" id="SSF46919">
    <property type="entry name" value="N-terminal Zn binding domain of HIV integrase"/>
    <property type="match status" value="1"/>
</dbReference>
<dbReference type="SUPFAM" id="SSF47836">
    <property type="entry name" value="Retroviral matrix proteins"/>
    <property type="match status" value="1"/>
</dbReference>
<dbReference type="SUPFAM" id="SSF47353">
    <property type="entry name" value="Retrovirus capsid dimerization domain-like"/>
    <property type="match status" value="1"/>
</dbReference>
<dbReference type="SUPFAM" id="SSF47943">
    <property type="entry name" value="Retrovirus capsid protein, N-terminal core domain"/>
    <property type="match status" value="1"/>
</dbReference>
<dbReference type="SUPFAM" id="SSF57756">
    <property type="entry name" value="Retrovirus zinc finger-like domains"/>
    <property type="match status" value="1"/>
</dbReference>
<dbReference type="SUPFAM" id="SSF53098">
    <property type="entry name" value="Ribonuclease H-like"/>
    <property type="match status" value="2"/>
</dbReference>
<dbReference type="PROSITE" id="PS50175">
    <property type="entry name" value="ASP_PROT_RETROV"/>
    <property type="match status" value="1"/>
</dbReference>
<dbReference type="PROSITE" id="PS00141">
    <property type="entry name" value="ASP_PROTEASE"/>
    <property type="match status" value="1"/>
</dbReference>
<dbReference type="PROSITE" id="PS50994">
    <property type="entry name" value="INTEGRASE"/>
    <property type="match status" value="1"/>
</dbReference>
<dbReference type="PROSITE" id="PS51027">
    <property type="entry name" value="INTEGRASE_DBD"/>
    <property type="match status" value="1"/>
</dbReference>
<dbReference type="PROSITE" id="PS50879">
    <property type="entry name" value="RNASE_H_1"/>
    <property type="match status" value="1"/>
</dbReference>
<dbReference type="PROSITE" id="PS50878">
    <property type="entry name" value="RT_POL"/>
    <property type="match status" value="1"/>
</dbReference>
<dbReference type="PROSITE" id="PS50158">
    <property type="entry name" value="ZF_CCHC"/>
    <property type="match status" value="2"/>
</dbReference>
<dbReference type="PROSITE" id="PS50876">
    <property type="entry name" value="ZF_INTEGRASE"/>
    <property type="match status" value="1"/>
</dbReference>
<keyword id="KW-0064">Aspartyl protease</keyword>
<keyword id="KW-0167">Capsid protein</keyword>
<keyword id="KW-0229">DNA integration</keyword>
<keyword id="KW-0233">DNA recombination</keyword>
<keyword id="KW-0238">DNA-binding</keyword>
<keyword id="KW-0239">DNA-directed DNA polymerase</keyword>
<keyword id="KW-0255">Endonuclease</keyword>
<keyword id="KW-1262">Eukaryotic host gene expression shutoff by virus</keyword>
<keyword id="KW-1193">Eukaryotic host translation shutoff by virus</keyword>
<keyword id="KW-1032">Host cell membrane</keyword>
<keyword id="KW-1035">Host cytoplasm</keyword>
<keyword id="KW-1190">Host gene expression shutoff by virus</keyword>
<keyword id="KW-1043">Host membrane</keyword>
<keyword id="KW-1048">Host nucleus</keyword>
<keyword id="KW-0945">Host-virus interaction</keyword>
<keyword id="KW-0378">Hydrolase</keyword>
<keyword id="KW-0449">Lipoprotein</keyword>
<keyword id="KW-0460">Magnesium</keyword>
<keyword id="KW-0472">Membrane</keyword>
<keyword id="KW-0479">Metal-binding</keyword>
<keyword id="KW-0511">Multifunctional enzyme</keyword>
<keyword id="KW-0519">Myristate</keyword>
<keyword id="KW-0540">Nuclease</keyword>
<keyword id="KW-0548">Nucleotidyltransferase</keyword>
<keyword id="KW-0597">Phosphoprotein</keyword>
<keyword id="KW-0645">Protease</keyword>
<keyword id="KW-0677">Repeat</keyword>
<keyword id="KW-0688">Ribosomal frameshifting</keyword>
<keyword id="KW-0694">RNA-binding</keyword>
<keyword id="KW-0695">RNA-directed DNA polymerase</keyword>
<keyword id="KW-0808">Transferase</keyword>
<keyword id="KW-1179">Viral genome integration</keyword>
<keyword id="KW-0543">Viral nucleoprotein</keyword>
<keyword id="KW-1163">Viral penetration into host nucleus</keyword>
<keyword id="KW-1188">Viral release from host cell</keyword>
<keyword id="KW-0946">Virion</keyword>
<keyword id="KW-0917">Virion maturation</keyword>
<keyword id="KW-1160">Virus entry into host cell</keyword>
<keyword id="KW-0862">Zinc</keyword>
<keyword id="KW-0863">Zinc-finger</keyword>
<protein>
    <recommendedName>
        <fullName>Gag-Pol polyprotein</fullName>
    </recommendedName>
    <alternativeName>
        <fullName>Pr160Gag-Pol</fullName>
    </alternativeName>
    <component>
        <recommendedName>
            <fullName>Matrix protein p17</fullName>
            <shortName>MA</shortName>
        </recommendedName>
    </component>
    <component>
        <recommendedName>
            <fullName>Capsid protein p24</fullName>
            <shortName>CA</shortName>
        </recommendedName>
    </component>
    <component>
        <recommendedName>
            <fullName>Nucleocapsid protein p7</fullName>
            <shortName>NC</shortName>
        </recommendedName>
    </component>
    <component>
        <recommendedName>
            <fullName>p6-pol</fullName>
            <shortName>p6*</shortName>
        </recommendedName>
    </component>
    <component>
        <recommendedName>
            <fullName>Protease</fullName>
            <ecNumber>3.4.23.16</ecNumber>
        </recommendedName>
        <alternativeName>
            <fullName>PR</fullName>
        </alternativeName>
        <alternativeName>
            <fullName>Retropepsin</fullName>
        </alternativeName>
    </component>
    <component>
        <recommendedName>
            <fullName>Reverse transcriptase/ribonuclease H</fullName>
            <ecNumber>2.7.7.49</ecNumber>
            <ecNumber>2.7.7.7</ecNumber>
            <ecNumber>3.1.26.13</ecNumber>
        </recommendedName>
        <alternativeName>
            <fullName>Exoribonuclease H</fullName>
            <ecNumber>3.1.13.2</ecNumber>
        </alternativeName>
        <alternativeName>
            <fullName>p66 RT</fullName>
        </alternativeName>
    </component>
    <component>
        <recommendedName>
            <fullName>p51 RT</fullName>
        </recommendedName>
    </component>
    <component>
        <recommendedName>
            <fullName>p15</fullName>
        </recommendedName>
    </component>
    <component>
        <recommendedName>
            <fullName>Integrase</fullName>
            <shortName>IN</shortName>
            <ecNumber evidence="4">2.7.7.-</ecNumber>
            <ecNumber evidence="4">3.1.-.-</ecNumber>
        </recommendedName>
    </component>
</protein>
<accession>P05895</accession>
<reference key="1">
    <citation type="journal article" date="1988" name="Nature">
        <title>Sequence of simian immunodeficiency virus from African green monkey, a new member of the HIV/SIV group.</title>
        <authorList>
            <person name="Fukasawa M."/>
            <person name="Miura T."/>
            <person name="Hasegawa A."/>
            <person name="Morikawa S."/>
            <person name="Tsujimoto H."/>
            <person name="Miki K."/>
            <person name="Kitamura T."/>
            <person name="Hayami M."/>
        </authorList>
    </citation>
    <scope>NUCLEOTIDE SEQUENCE [GENOMIC DNA]</scope>
</reference>
<name>POL_SIVVT</name>
<organismHost>
    <name type="scientific">Cercopithecidae</name>
    <name type="common">Old World monkeys</name>
    <dbReference type="NCBI Taxonomy" id="9527"/>
</organismHost>
<sequence>MGAATSALNRRQLDKFEHIRLRPTGKKKYQIKHLIWAGKEMERFGLHERLLESEEGCKKIIEVLYPLEPTGSEGLKSLFNLVCVLFCVHKDKEVKDTEEAVAIVRQCCHLVEKERNAERNTTETSSGQKKNDKGVTVPPGGSQNFPAQQQGNAWIHVPLSPRTLNAWVKAVEEKKFGAEIVPMFQALSEGCTPYDINQMLNVLGDHQGALQIVKEIINEEAAQWDIAHPPPAGPLPAGQLRDPRGSDIAGTTSTVQEQLEWIYTANPRVDVGAIYRRWIILGLQKCVKMYNPVSVLDIRQGPKEAFKDYVDRFYKAIRAEQASGEVKQWMTESLLIQNANPDCKVILKGLGMHPTLEEMLTACQGVGGPSYKAKVMAEMMQNMQSQNMMQQGGQRGRPRPPVKCYNCGKFGHMQRQCPEPRKMRCLKCGKPGHLAKDCRGQVNFFRVWTVDGGKTEKFSRRYSWSGTECASSTERHHPIRPSKEAPAAICRERETTEGAKEESTGNESGLDRGIFFELPLWRRPIKTVYIEGVPIKALLDTGADDTIIKENDLQLSGPWRPKIIGGIGGGLNVKEYNDREVKIEDKILRGTILLGATPINIIGRNLLAPAVPRLVMGQLSEKIPVTPVKLKEGARGPCVRQWPLSKEKIEALQEICSQLEQEGKISRVGGENAYNTPIFCIKKKDKSQWRMLVDFRELNKATQDFFEVQLGIPHPAGLRKMRQITVLDVGDAYYSIPLDPNFRKYTAFTIPTVNNQGPGIRYQFNCLPQGWKGSPTIFQNTAASILEEIKRNLPALTIVQYMDDLWVGSQENEHTHDKLVEQLRTKLQAWGLETPEKKMQKEPPYEWMGYKLWPHKWELSRIQLEEKDEWTVNDIQKLVGKLNWAAQLYPGLKTRICKLITGGKKNLLELVAWTPEAEAEYAENAEILKTEQEGTYYKPGIPIRAAVQKLEGGQWSYQFKQEGQVLKVGKYTKQKNTHTNELRTLAGLVQKICKEALVIWGILPVLELPIEREVWEQWWADYWQVSWIPEWDFVSTPPLLKLWYTLTKEPIPKEDVYYVGACNRNSKEGKAGYISQYGKQRVETLENTTNQQAKLTAIKMALEDSGPNVNIVTDSQYAMGILTAQPTQSDSPLVEQIIALMIQKQQIYLQWVPAHKGIGGNEEIDKLVSKGIRRVLFLEKIEEAQEKHERYHNNWKNLADTYGLPQIVAKEIVAMCPKCQIKGEPVHGQVDASPGTWQMDCTHLEKKVVIVAVHVASGFIEAEVIPRETGKETAKFLLKILSRWPITQLHTDNGPNFTSQEVAAICWWGKIEHTTGIPYNPQSQGSIESMNKQLKEIIGKIRDDCQYTEAAVLMACILHNFKRKGGIGGQTSAERLINIITTQLEIQHLQTKIQKILNFRVYYREGRDPVWKGPAQLIWKGEGAVVLKDGSDLKVVPRRKAKIIKDYEPKQRVGNEGDVEGTRGSDN</sequence>
<proteinExistence type="inferred from homology"/>
<evidence type="ECO:0000250" key="1"/>
<evidence type="ECO:0000250" key="2">
    <source>
        <dbReference type="UniProtKB" id="P03366"/>
    </source>
</evidence>
<evidence type="ECO:0000250" key="3">
    <source>
        <dbReference type="UniProtKB" id="P03367"/>
    </source>
</evidence>
<evidence type="ECO:0000250" key="4">
    <source>
        <dbReference type="UniProtKB" id="P04585"/>
    </source>
</evidence>
<evidence type="ECO:0000250" key="5">
    <source>
        <dbReference type="UniProtKB" id="P04591"/>
    </source>
</evidence>
<evidence type="ECO:0000250" key="6">
    <source>
        <dbReference type="UniProtKB" id="P12493"/>
    </source>
</evidence>
<evidence type="ECO:0000250" key="7">
    <source>
        <dbReference type="UniProtKB" id="P12497"/>
    </source>
</evidence>
<evidence type="ECO:0000255" key="8"/>
<evidence type="ECO:0000255" key="9">
    <source>
        <dbReference type="PROSITE-ProRule" id="PRU00047"/>
    </source>
</evidence>
<evidence type="ECO:0000255" key="10">
    <source>
        <dbReference type="PROSITE-ProRule" id="PRU00275"/>
    </source>
</evidence>
<evidence type="ECO:0000255" key="11">
    <source>
        <dbReference type="PROSITE-ProRule" id="PRU00405"/>
    </source>
</evidence>
<evidence type="ECO:0000255" key="12">
    <source>
        <dbReference type="PROSITE-ProRule" id="PRU00408"/>
    </source>
</evidence>
<evidence type="ECO:0000255" key="13">
    <source>
        <dbReference type="PROSITE-ProRule" id="PRU00450"/>
    </source>
</evidence>
<evidence type="ECO:0000255" key="14">
    <source>
        <dbReference type="PROSITE-ProRule" id="PRU00457"/>
    </source>
</evidence>
<evidence type="ECO:0000255" key="15">
    <source>
        <dbReference type="PROSITE-ProRule" id="PRU00506"/>
    </source>
</evidence>
<evidence type="ECO:0000255" key="16">
    <source>
        <dbReference type="PROSITE-ProRule" id="PRU10094"/>
    </source>
</evidence>
<evidence type="ECO:0000256" key="17">
    <source>
        <dbReference type="SAM" id="MobiDB-lite"/>
    </source>
</evidence>
<evidence type="ECO:0000305" key="18"/>
<organism>
    <name type="scientific">Simian immunodeficiency virus agm.vervet (isolate AGM TYO-1)</name>
    <name type="common">SIV-agm.ver</name>
    <name type="synonym">Simian immunodeficiency virus African green monkey vervet</name>
    <dbReference type="NCBI Taxonomy" id="11731"/>
    <lineage>
        <taxon>Viruses</taxon>
        <taxon>Riboviria</taxon>
        <taxon>Pararnavirae</taxon>
        <taxon>Artverviricota</taxon>
        <taxon>Revtraviricetes</taxon>
        <taxon>Ortervirales</taxon>
        <taxon>Retroviridae</taxon>
        <taxon>Orthoretrovirinae</taxon>
        <taxon>Lentivirus</taxon>
        <taxon>Simian immunodeficiency virus</taxon>
    </lineage>
</organism>
<feature type="initiator methionine" description="Removed; by host" evidence="1">
    <location>
        <position position="1"/>
    </location>
</feature>
<feature type="chain" id="PRO_0000306015" description="Gag-Pol polyprotein">
    <location>
        <begin position="2"/>
        <end position="1467"/>
    </location>
</feature>
<feature type="chain" id="PRO_0000306016" description="Matrix protein p17" evidence="1">
    <location>
        <begin position="2"/>
        <end position="145"/>
    </location>
</feature>
<feature type="chain" id="PRO_0000306017" description="Capsid protein p24" evidence="1">
    <location>
        <begin position="146"/>
        <end position="376"/>
    </location>
</feature>
<feature type="chain" id="PRO_0000306018" description="Nucleocapsid protein p7" evidence="1">
    <location>
        <begin position="377"/>
        <end position="443"/>
    </location>
</feature>
<feature type="chain" id="PRO_0000306019" description="p6-pol" evidence="8">
    <location>
        <begin position="444"/>
        <end position="515"/>
    </location>
</feature>
<feature type="chain" id="PRO_0000306020" description="Protease" evidence="1">
    <location>
        <begin position="516"/>
        <end position="616"/>
    </location>
</feature>
<feature type="chain" id="PRO_0000306021" description="Reverse transcriptase/ribonuclease H" evidence="1">
    <location>
        <begin position="617"/>
        <end position="1176"/>
    </location>
</feature>
<feature type="chain" id="PRO_0000306022" description="p51 RT" evidence="1">
    <location>
        <begin position="617"/>
        <end position="1057"/>
    </location>
</feature>
<feature type="chain" id="PRO_0000306023" description="p15" evidence="1">
    <location>
        <begin position="1058"/>
        <end position="1176"/>
    </location>
</feature>
<feature type="chain" id="PRO_0000306024" description="Integrase" evidence="1">
    <location>
        <begin position="1177"/>
        <end position="1467"/>
    </location>
</feature>
<feature type="domain" description="Peptidase A2" evidence="10">
    <location>
        <begin position="535"/>
        <end position="606"/>
    </location>
</feature>
<feature type="domain" description="Reverse transcriptase" evidence="11">
    <location>
        <begin position="662"/>
        <end position="852"/>
    </location>
</feature>
<feature type="domain" description="RNase H type-1" evidence="12">
    <location>
        <begin position="1050"/>
        <end position="1173"/>
    </location>
</feature>
<feature type="domain" description="Integrase catalytic" evidence="14">
    <location>
        <begin position="1230"/>
        <end position="1380"/>
    </location>
</feature>
<feature type="zinc finger region" description="CCHC-type 1" evidence="9">
    <location>
        <begin position="402"/>
        <end position="419"/>
    </location>
</feature>
<feature type="zinc finger region" description="CCHC-type 2" evidence="9">
    <location>
        <begin position="423"/>
        <end position="440"/>
    </location>
</feature>
<feature type="zinc finger region" description="Integrase-type" evidence="13">
    <location>
        <begin position="1179"/>
        <end position="1220"/>
    </location>
</feature>
<feature type="DNA-binding region" description="Integrase-type" evidence="15">
    <location>
        <begin position="1399"/>
        <end position="1446"/>
    </location>
</feature>
<feature type="region of interest" description="Disordered" evidence="17">
    <location>
        <begin position="116"/>
        <end position="144"/>
    </location>
</feature>
<feature type="region of interest" description="RT 'primer grip'" evidence="1">
    <location>
        <begin position="845"/>
        <end position="853"/>
    </location>
</feature>
<feature type="region of interest" description="Disordered" evidence="17">
    <location>
        <begin position="1447"/>
        <end position="1467"/>
    </location>
</feature>
<feature type="short sequence motif" description="Nuclear export signal" evidence="1">
    <location>
        <begin position="16"/>
        <end position="22"/>
    </location>
</feature>
<feature type="short sequence motif" description="Nuclear localization signal" evidence="1">
    <location>
        <begin position="26"/>
        <end position="32"/>
    </location>
</feature>
<feature type="short sequence motif" description="Tryptophan repeat motif" evidence="1">
    <location>
        <begin position="1015"/>
        <end position="1031"/>
    </location>
</feature>
<feature type="active site" description="For protease activity; shared with dimeric partner" evidence="16">
    <location>
        <position position="540"/>
    </location>
</feature>
<feature type="binding site" evidence="1">
    <location>
        <position position="728"/>
    </location>
    <ligand>
        <name>Mg(2+)</name>
        <dbReference type="ChEBI" id="CHEBI:18420"/>
        <label>1</label>
        <note>catalytic; for reverse transcriptase activity</note>
    </ligand>
</feature>
<feature type="binding site" evidence="1">
    <location>
        <position position="803"/>
    </location>
    <ligand>
        <name>Mg(2+)</name>
        <dbReference type="ChEBI" id="CHEBI:18420"/>
        <label>1</label>
        <note>catalytic; for reverse transcriptase activity</note>
    </ligand>
</feature>
<feature type="binding site" evidence="1">
    <location>
        <position position="804"/>
    </location>
    <ligand>
        <name>Mg(2+)</name>
        <dbReference type="ChEBI" id="CHEBI:18420"/>
        <label>1</label>
        <note>catalytic; for reverse transcriptase activity</note>
    </ligand>
</feature>
<feature type="binding site" evidence="1">
    <location>
        <position position="1114"/>
    </location>
    <ligand>
        <name>Mg(2+)</name>
        <dbReference type="ChEBI" id="CHEBI:18420"/>
        <label>2</label>
        <note>catalytic; for RNase H activity</note>
    </ligand>
</feature>
<feature type="binding site" evidence="1">
    <location>
        <position position="1165"/>
    </location>
    <ligand>
        <name>Mg(2+)</name>
        <dbReference type="ChEBI" id="CHEBI:18420"/>
        <label>2</label>
        <note>catalytic; for RNase H activity</note>
    </ligand>
</feature>
<feature type="binding site" evidence="13">
    <location>
        <position position="1188"/>
    </location>
    <ligand>
        <name>Zn(2+)</name>
        <dbReference type="ChEBI" id="CHEBI:29105"/>
    </ligand>
</feature>
<feature type="binding site" evidence="13">
    <location>
        <position position="1192"/>
    </location>
    <ligand>
        <name>Zn(2+)</name>
        <dbReference type="ChEBI" id="CHEBI:29105"/>
    </ligand>
</feature>
<feature type="binding site" evidence="13">
    <location>
        <position position="1216"/>
    </location>
    <ligand>
        <name>Zn(2+)</name>
        <dbReference type="ChEBI" id="CHEBI:29105"/>
    </ligand>
</feature>
<feature type="binding site" evidence="13">
    <location>
        <position position="1219"/>
    </location>
    <ligand>
        <name>Zn(2+)</name>
        <dbReference type="ChEBI" id="CHEBI:29105"/>
    </ligand>
</feature>
<feature type="binding site" evidence="1">
    <location>
        <position position="1240"/>
    </location>
    <ligand>
        <name>Mg(2+)</name>
        <dbReference type="ChEBI" id="CHEBI:18420"/>
        <label>3</label>
        <note>catalytic; for integrase activity</note>
    </ligand>
</feature>
<feature type="binding site" evidence="1">
    <location>
        <position position="1292"/>
    </location>
    <ligand>
        <name>Mg(2+)</name>
        <dbReference type="ChEBI" id="CHEBI:18420"/>
        <label>3</label>
        <note>catalytic; for integrase activity</note>
    </ligand>
</feature>
<feature type="site" description="Cleavage; by viral protease" evidence="1">
    <location>
        <begin position="145"/>
        <end position="146"/>
    </location>
</feature>
<feature type="site" description="Cis/trans isomerization of proline peptide bond; by human PPIA/CYPA" evidence="1">
    <location>
        <begin position="233"/>
        <end position="234"/>
    </location>
</feature>
<feature type="site" description="Cleavage; by viral protease" evidence="1">
    <location>
        <begin position="376"/>
        <end position="377"/>
    </location>
</feature>
<feature type="site" description="Cleavage; by viral protease" evidence="1">
    <location>
        <begin position="443"/>
        <end position="444"/>
    </location>
</feature>
<feature type="site" description="Cleavage; by viral protease" evidence="1">
    <location>
        <begin position="515"/>
        <end position="516"/>
    </location>
</feature>
<feature type="site" description="Cleavage; by viral protease" evidence="8">
    <location>
        <begin position="616"/>
        <end position="617"/>
    </location>
</feature>
<feature type="site" description="Essential for RT p66/p51 heterodimerization" evidence="1">
    <location>
        <position position="1018"/>
    </location>
</feature>
<feature type="site" description="Essential for RT p66/p51 heterodimerization" evidence="1">
    <location>
        <position position="1031"/>
    </location>
</feature>
<feature type="site" description="Cleavage; by viral protease" evidence="1">
    <location>
        <begin position="1057"/>
        <end position="1058"/>
    </location>
</feature>
<feature type="site" description="Cleavage; by viral protease" evidence="1">
    <location>
        <begin position="1176"/>
        <end position="1177"/>
    </location>
</feature>
<feature type="lipid moiety-binding region" description="N-myristoyl glycine; by host" evidence="1">
    <location>
        <position position="2"/>
    </location>
</feature>
<gene>
    <name type="primary">gag-pol</name>
</gene>